<name>PEPQ_ACTP2</name>
<sequence>MKQLFTQHIKRLQQVVQTILETNFLSGLWIHSGTARYHFLDDQTAPFKINPHFNYLFPFPTAENCWLFLDGKNKPTVYFYAPNDYWHTPPVAPTDAFFADEFQWVILQDSQEIAKFIQNPTACTFIGEDENLAESLGFNQINPQKVLNQFHFERSIKSEFEIEAIYQAQFAALKGHQAAKQAFFEGKSEFEINLAYLKASQQSDLNVPYGNIVAINQHSAILHYTQLDYAPNPQQQSFLIDAGATIHGYASDITRTYAADPNSEFAAMIKQMEQYKYRIIDQLTVGVNYLSYHTQMQQWIAEMLYEYDFVRLTPEQIFEEGISRAFLPHGLGHLLGLQVHDAAGFQQNPRGTRKSPPEVYPSLRCTRDLAENMVLTIEPGFYFIDMLLNPLQNSPLARHINWQKIAEFKQFGGIRTEDNIVMRSQGAENLTQKAEIELQLSDH</sequence>
<accession>A3MYG3</accession>
<dbReference type="EC" id="3.4.13.9" evidence="1"/>
<dbReference type="EMBL" id="CP000569">
    <property type="protein sequence ID" value="ABN73199.1"/>
    <property type="molecule type" value="Genomic_DNA"/>
</dbReference>
<dbReference type="RefSeq" id="WP_005606778.1">
    <property type="nucleotide sequence ID" value="NC_009053.1"/>
</dbReference>
<dbReference type="SMR" id="A3MYG3"/>
<dbReference type="STRING" id="416269.APL_0091"/>
<dbReference type="EnsemblBacteria" id="ABN73199">
    <property type="protein sequence ID" value="ABN73199"/>
    <property type="gene ID" value="APL_0091"/>
</dbReference>
<dbReference type="KEGG" id="apl:APL_0091"/>
<dbReference type="eggNOG" id="COG0006">
    <property type="taxonomic scope" value="Bacteria"/>
</dbReference>
<dbReference type="HOGENOM" id="CLU_050675_0_0_6"/>
<dbReference type="Proteomes" id="UP000001432">
    <property type="component" value="Chromosome"/>
</dbReference>
<dbReference type="GO" id="GO:0005829">
    <property type="term" value="C:cytosol"/>
    <property type="evidence" value="ECO:0007669"/>
    <property type="project" value="TreeGrafter"/>
</dbReference>
<dbReference type="GO" id="GO:0004177">
    <property type="term" value="F:aminopeptidase activity"/>
    <property type="evidence" value="ECO:0007669"/>
    <property type="project" value="TreeGrafter"/>
</dbReference>
<dbReference type="GO" id="GO:0046872">
    <property type="term" value="F:metal ion binding"/>
    <property type="evidence" value="ECO:0007669"/>
    <property type="project" value="UniProtKB-KW"/>
</dbReference>
<dbReference type="GO" id="GO:0008235">
    <property type="term" value="F:metalloexopeptidase activity"/>
    <property type="evidence" value="ECO:0007669"/>
    <property type="project" value="UniProtKB-UniRule"/>
</dbReference>
<dbReference type="GO" id="GO:0016795">
    <property type="term" value="F:phosphoric triester hydrolase activity"/>
    <property type="evidence" value="ECO:0007669"/>
    <property type="project" value="InterPro"/>
</dbReference>
<dbReference type="GO" id="GO:0102009">
    <property type="term" value="F:proline dipeptidase activity"/>
    <property type="evidence" value="ECO:0007669"/>
    <property type="project" value="UniProtKB-EC"/>
</dbReference>
<dbReference type="GO" id="GO:0006508">
    <property type="term" value="P:proteolysis"/>
    <property type="evidence" value="ECO:0007669"/>
    <property type="project" value="UniProtKB-KW"/>
</dbReference>
<dbReference type="Gene3D" id="3.90.230.10">
    <property type="entry name" value="Creatinase/methionine aminopeptidase superfamily"/>
    <property type="match status" value="1"/>
</dbReference>
<dbReference type="Gene3D" id="3.40.350.10">
    <property type="entry name" value="Creatinase/prolidase N-terminal domain"/>
    <property type="match status" value="1"/>
</dbReference>
<dbReference type="HAMAP" id="MF_01279">
    <property type="entry name" value="X_Pro_dipeptid"/>
    <property type="match status" value="1"/>
</dbReference>
<dbReference type="InterPro" id="IPR029149">
    <property type="entry name" value="Creatin/AminoP/Spt16_N"/>
</dbReference>
<dbReference type="InterPro" id="IPR036005">
    <property type="entry name" value="Creatinase/aminopeptidase-like"/>
</dbReference>
<dbReference type="InterPro" id="IPR048819">
    <property type="entry name" value="PepQ_N"/>
</dbReference>
<dbReference type="InterPro" id="IPR000994">
    <property type="entry name" value="Pept_M24"/>
</dbReference>
<dbReference type="InterPro" id="IPR001131">
    <property type="entry name" value="Peptidase_M24B_aminopep-P_CS"/>
</dbReference>
<dbReference type="InterPro" id="IPR052433">
    <property type="entry name" value="X-Pro_dipept-like"/>
</dbReference>
<dbReference type="InterPro" id="IPR022846">
    <property type="entry name" value="X_Pro_dipept"/>
</dbReference>
<dbReference type="NCBIfam" id="NF010133">
    <property type="entry name" value="PRK13607.1"/>
    <property type="match status" value="1"/>
</dbReference>
<dbReference type="PANTHER" id="PTHR43226">
    <property type="entry name" value="XAA-PRO AMINOPEPTIDASE 3"/>
    <property type="match status" value="1"/>
</dbReference>
<dbReference type="PANTHER" id="PTHR43226:SF8">
    <property type="entry name" value="XAA-PRO DIPEPTIDASE"/>
    <property type="match status" value="1"/>
</dbReference>
<dbReference type="Pfam" id="PF21216">
    <property type="entry name" value="PepQ_N"/>
    <property type="match status" value="1"/>
</dbReference>
<dbReference type="Pfam" id="PF00557">
    <property type="entry name" value="Peptidase_M24"/>
    <property type="match status" value="1"/>
</dbReference>
<dbReference type="SUPFAM" id="SSF55920">
    <property type="entry name" value="Creatinase/aminopeptidase"/>
    <property type="match status" value="1"/>
</dbReference>
<dbReference type="PROSITE" id="PS00491">
    <property type="entry name" value="PROLINE_PEPTIDASE"/>
    <property type="match status" value="1"/>
</dbReference>
<evidence type="ECO:0000255" key="1">
    <source>
        <dbReference type="HAMAP-Rule" id="MF_01279"/>
    </source>
</evidence>
<organism>
    <name type="scientific">Actinobacillus pleuropneumoniae serotype 5b (strain L20)</name>
    <dbReference type="NCBI Taxonomy" id="416269"/>
    <lineage>
        <taxon>Bacteria</taxon>
        <taxon>Pseudomonadati</taxon>
        <taxon>Pseudomonadota</taxon>
        <taxon>Gammaproteobacteria</taxon>
        <taxon>Pasteurellales</taxon>
        <taxon>Pasteurellaceae</taxon>
        <taxon>Actinobacillus</taxon>
    </lineage>
</organism>
<proteinExistence type="inferred from homology"/>
<reference key="1">
    <citation type="journal article" date="2008" name="J. Bacteriol.">
        <title>The complete genome sequence of Actinobacillus pleuropneumoniae L20 (serotype 5b).</title>
        <authorList>
            <person name="Foote S.J."/>
            <person name="Bosse J.T."/>
            <person name="Bouevitch A.B."/>
            <person name="Langford P.R."/>
            <person name="Young N.M."/>
            <person name="Nash J.H.E."/>
        </authorList>
    </citation>
    <scope>NUCLEOTIDE SEQUENCE [LARGE SCALE GENOMIC DNA]</scope>
    <source>
        <strain>L20</strain>
    </source>
</reference>
<protein>
    <recommendedName>
        <fullName evidence="1">Xaa-Pro dipeptidase</fullName>
        <shortName evidence="1">X-Pro dipeptidase</shortName>
        <ecNumber evidence="1">3.4.13.9</ecNumber>
    </recommendedName>
    <alternativeName>
        <fullName evidence="1">Imidodipeptidase</fullName>
    </alternativeName>
    <alternativeName>
        <fullName evidence="1">Proline dipeptidase</fullName>
        <shortName evidence="1">Prolidase</shortName>
    </alternativeName>
</protein>
<keyword id="KW-0224">Dipeptidase</keyword>
<keyword id="KW-0378">Hydrolase</keyword>
<keyword id="KW-0464">Manganese</keyword>
<keyword id="KW-0479">Metal-binding</keyword>
<keyword id="KW-0482">Metalloprotease</keyword>
<keyword id="KW-0645">Protease</keyword>
<keyword id="KW-1185">Reference proteome</keyword>
<feature type="chain" id="PRO_0000303836" description="Xaa-Pro dipeptidase">
    <location>
        <begin position="1"/>
        <end position="443"/>
    </location>
</feature>
<feature type="binding site" evidence="1">
    <location>
        <position position="241"/>
    </location>
    <ligand>
        <name>Mn(2+)</name>
        <dbReference type="ChEBI" id="CHEBI:29035"/>
        <label>2</label>
    </ligand>
</feature>
<feature type="binding site" evidence="1">
    <location>
        <position position="252"/>
    </location>
    <ligand>
        <name>Mn(2+)</name>
        <dbReference type="ChEBI" id="CHEBI:29035"/>
        <label>1</label>
    </ligand>
</feature>
<feature type="binding site" evidence="1">
    <location>
        <position position="252"/>
    </location>
    <ligand>
        <name>Mn(2+)</name>
        <dbReference type="ChEBI" id="CHEBI:29035"/>
        <label>2</label>
    </ligand>
</feature>
<feature type="binding site" evidence="1">
    <location>
        <position position="333"/>
    </location>
    <ligand>
        <name>Mn(2+)</name>
        <dbReference type="ChEBI" id="CHEBI:29035"/>
        <label>1</label>
    </ligand>
</feature>
<feature type="binding site" evidence="1">
    <location>
        <position position="378"/>
    </location>
    <ligand>
        <name>Mn(2+)</name>
        <dbReference type="ChEBI" id="CHEBI:29035"/>
        <label>1</label>
    </ligand>
</feature>
<feature type="binding site" evidence="1">
    <location>
        <position position="417"/>
    </location>
    <ligand>
        <name>Mn(2+)</name>
        <dbReference type="ChEBI" id="CHEBI:29035"/>
        <label>1</label>
    </ligand>
</feature>
<feature type="binding site" evidence="1">
    <location>
        <position position="417"/>
    </location>
    <ligand>
        <name>Mn(2+)</name>
        <dbReference type="ChEBI" id="CHEBI:29035"/>
        <label>2</label>
    </ligand>
</feature>
<gene>
    <name evidence="1" type="primary">pepQ</name>
    <name type="ordered locus">APL_0091</name>
</gene>
<comment type="function">
    <text evidence="1">Splits dipeptides with a prolyl residue in the C-terminal position.</text>
</comment>
<comment type="catalytic activity">
    <reaction evidence="1">
        <text>Xaa-L-Pro dipeptide + H2O = an L-alpha-amino acid + L-proline</text>
        <dbReference type="Rhea" id="RHEA:76407"/>
        <dbReference type="ChEBI" id="CHEBI:15377"/>
        <dbReference type="ChEBI" id="CHEBI:59869"/>
        <dbReference type="ChEBI" id="CHEBI:60039"/>
        <dbReference type="ChEBI" id="CHEBI:195196"/>
        <dbReference type="EC" id="3.4.13.9"/>
    </reaction>
</comment>
<comment type="cofactor">
    <cofactor evidence="1">
        <name>Mn(2+)</name>
        <dbReference type="ChEBI" id="CHEBI:29035"/>
    </cofactor>
    <text evidence="1">Binds 2 manganese ions per subunit.</text>
</comment>
<comment type="similarity">
    <text evidence="1">Belongs to the peptidase M24B family. Bacterial-type prolidase subfamily.</text>
</comment>